<name>RNH_BRADU</name>
<reference key="1">
    <citation type="journal article" date="2002" name="DNA Res.">
        <title>Complete genomic sequence of nitrogen-fixing symbiotic bacterium Bradyrhizobium japonicum USDA110.</title>
        <authorList>
            <person name="Kaneko T."/>
            <person name="Nakamura Y."/>
            <person name="Sato S."/>
            <person name="Minamisawa K."/>
            <person name="Uchiumi T."/>
            <person name="Sasamoto S."/>
            <person name="Watanabe A."/>
            <person name="Idesawa K."/>
            <person name="Iriguchi M."/>
            <person name="Kawashima K."/>
            <person name="Kohara M."/>
            <person name="Matsumoto M."/>
            <person name="Shimpo S."/>
            <person name="Tsuruoka H."/>
            <person name="Wada T."/>
            <person name="Yamada M."/>
            <person name="Tabata S."/>
        </authorList>
    </citation>
    <scope>NUCLEOTIDE SEQUENCE [LARGE SCALE GENOMIC DNA]</scope>
    <source>
        <strain>JCM 10833 / BCRC 13528 / IAM 13628 / NBRC 14792 / USDA 110</strain>
    </source>
</reference>
<evidence type="ECO:0000255" key="1">
    <source>
        <dbReference type="HAMAP-Rule" id="MF_00042"/>
    </source>
</evidence>
<evidence type="ECO:0000255" key="2">
    <source>
        <dbReference type="PROSITE-ProRule" id="PRU00408"/>
    </source>
</evidence>
<proteinExistence type="inferred from homology"/>
<gene>
    <name evidence="1" type="primary">rnhA</name>
    <name type="ordered locus">blr1316</name>
</gene>
<keyword id="KW-0963">Cytoplasm</keyword>
<keyword id="KW-0255">Endonuclease</keyword>
<keyword id="KW-0378">Hydrolase</keyword>
<keyword id="KW-0460">Magnesium</keyword>
<keyword id="KW-0479">Metal-binding</keyword>
<keyword id="KW-0540">Nuclease</keyword>
<keyword id="KW-1185">Reference proteome</keyword>
<accession>Q89UU3</accession>
<sequence>MSELPVVTIYTDGACSGNPGPGGWGAILKFGDKEKELNGGERHTTNNQMELMAAISALEALKKPCTVDLYTDSQYVRQGITGWIHGWKRNGWRTADKKPVKNVELWQRLDAALKAHQVRWHWVKGHAGHPENERADQLARDGIVKARLQQRVAE</sequence>
<protein>
    <recommendedName>
        <fullName evidence="1">Ribonuclease H</fullName>
        <shortName evidence="1">RNase H</shortName>
        <ecNumber evidence="1">3.1.26.4</ecNumber>
    </recommendedName>
</protein>
<organism>
    <name type="scientific">Bradyrhizobium diazoefficiens (strain JCM 10833 / BCRC 13528 / IAM 13628 / NBRC 14792 / USDA 110)</name>
    <dbReference type="NCBI Taxonomy" id="224911"/>
    <lineage>
        <taxon>Bacteria</taxon>
        <taxon>Pseudomonadati</taxon>
        <taxon>Pseudomonadota</taxon>
        <taxon>Alphaproteobacteria</taxon>
        <taxon>Hyphomicrobiales</taxon>
        <taxon>Nitrobacteraceae</taxon>
        <taxon>Bradyrhizobium</taxon>
    </lineage>
</organism>
<dbReference type="EC" id="3.1.26.4" evidence="1"/>
<dbReference type="EMBL" id="BA000040">
    <property type="protein sequence ID" value="BAC46581.1"/>
    <property type="molecule type" value="Genomic_DNA"/>
</dbReference>
<dbReference type="RefSeq" id="NP_767956.1">
    <property type="nucleotide sequence ID" value="NC_004463.1"/>
</dbReference>
<dbReference type="RefSeq" id="WP_011084134.1">
    <property type="nucleotide sequence ID" value="NC_004463.1"/>
</dbReference>
<dbReference type="SMR" id="Q89UU3"/>
<dbReference type="FunCoup" id="Q89UU3">
    <property type="interactions" value="290"/>
</dbReference>
<dbReference type="STRING" id="224911.AAV28_03470"/>
<dbReference type="EnsemblBacteria" id="BAC46581">
    <property type="protein sequence ID" value="BAC46581"/>
    <property type="gene ID" value="BAC46581"/>
</dbReference>
<dbReference type="GeneID" id="46488584"/>
<dbReference type="KEGG" id="bja:blr1316"/>
<dbReference type="PATRIC" id="fig|224911.44.peg.731"/>
<dbReference type="eggNOG" id="COG0328">
    <property type="taxonomic scope" value="Bacteria"/>
</dbReference>
<dbReference type="HOGENOM" id="CLU_030894_6_0_5"/>
<dbReference type="InParanoid" id="Q89UU3"/>
<dbReference type="OrthoDB" id="7845843at2"/>
<dbReference type="PhylomeDB" id="Q89UU3"/>
<dbReference type="Proteomes" id="UP000002526">
    <property type="component" value="Chromosome"/>
</dbReference>
<dbReference type="GO" id="GO:0005737">
    <property type="term" value="C:cytoplasm"/>
    <property type="evidence" value="ECO:0007669"/>
    <property type="project" value="UniProtKB-SubCell"/>
</dbReference>
<dbReference type="GO" id="GO:0000287">
    <property type="term" value="F:magnesium ion binding"/>
    <property type="evidence" value="ECO:0007669"/>
    <property type="project" value="UniProtKB-UniRule"/>
</dbReference>
<dbReference type="GO" id="GO:0003676">
    <property type="term" value="F:nucleic acid binding"/>
    <property type="evidence" value="ECO:0007669"/>
    <property type="project" value="InterPro"/>
</dbReference>
<dbReference type="GO" id="GO:0004523">
    <property type="term" value="F:RNA-DNA hybrid ribonuclease activity"/>
    <property type="evidence" value="ECO:0000318"/>
    <property type="project" value="GO_Central"/>
</dbReference>
<dbReference type="GO" id="GO:0043137">
    <property type="term" value="P:DNA replication, removal of RNA primer"/>
    <property type="evidence" value="ECO:0000318"/>
    <property type="project" value="GO_Central"/>
</dbReference>
<dbReference type="CDD" id="cd09278">
    <property type="entry name" value="RNase_HI_prokaryote_like"/>
    <property type="match status" value="1"/>
</dbReference>
<dbReference type="FunFam" id="3.30.420.10:FF:000008">
    <property type="entry name" value="Ribonuclease H"/>
    <property type="match status" value="1"/>
</dbReference>
<dbReference type="Gene3D" id="3.30.420.10">
    <property type="entry name" value="Ribonuclease H-like superfamily/Ribonuclease H"/>
    <property type="match status" value="1"/>
</dbReference>
<dbReference type="HAMAP" id="MF_00042">
    <property type="entry name" value="RNase_H"/>
    <property type="match status" value="1"/>
</dbReference>
<dbReference type="InterPro" id="IPR050092">
    <property type="entry name" value="RNase_H"/>
</dbReference>
<dbReference type="InterPro" id="IPR012337">
    <property type="entry name" value="RNaseH-like_sf"/>
</dbReference>
<dbReference type="InterPro" id="IPR002156">
    <property type="entry name" value="RNaseH_domain"/>
</dbReference>
<dbReference type="InterPro" id="IPR036397">
    <property type="entry name" value="RNaseH_sf"/>
</dbReference>
<dbReference type="InterPro" id="IPR022892">
    <property type="entry name" value="RNaseHI"/>
</dbReference>
<dbReference type="NCBIfam" id="NF001236">
    <property type="entry name" value="PRK00203.1"/>
    <property type="match status" value="1"/>
</dbReference>
<dbReference type="PANTHER" id="PTHR10642">
    <property type="entry name" value="RIBONUCLEASE H1"/>
    <property type="match status" value="1"/>
</dbReference>
<dbReference type="PANTHER" id="PTHR10642:SF26">
    <property type="entry name" value="RIBONUCLEASE H1"/>
    <property type="match status" value="1"/>
</dbReference>
<dbReference type="Pfam" id="PF00075">
    <property type="entry name" value="RNase_H"/>
    <property type="match status" value="1"/>
</dbReference>
<dbReference type="SUPFAM" id="SSF53098">
    <property type="entry name" value="Ribonuclease H-like"/>
    <property type="match status" value="1"/>
</dbReference>
<dbReference type="PROSITE" id="PS50879">
    <property type="entry name" value="RNASE_H_1"/>
    <property type="match status" value="1"/>
</dbReference>
<comment type="function">
    <text evidence="1">Endonuclease that specifically degrades the RNA of RNA-DNA hybrids.</text>
</comment>
<comment type="catalytic activity">
    <reaction evidence="1">
        <text>Endonucleolytic cleavage to 5'-phosphomonoester.</text>
        <dbReference type="EC" id="3.1.26.4"/>
    </reaction>
</comment>
<comment type="cofactor">
    <cofactor evidence="1">
        <name>Mg(2+)</name>
        <dbReference type="ChEBI" id="CHEBI:18420"/>
    </cofactor>
    <text evidence="1">Binds 1 Mg(2+) ion per subunit. May bind a second metal ion at a regulatory site, or after substrate binding.</text>
</comment>
<comment type="subunit">
    <text evidence="1">Monomer.</text>
</comment>
<comment type="subcellular location">
    <subcellularLocation>
        <location evidence="1">Cytoplasm</location>
    </subcellularLocation>
</comment>
<comment type="similarity">
    <text evidence="1">Belongs to the RNase H family.</text>
</comment>
<feature type="chain" id="PRO_0000195363" description="Ribonuclease H">
    <location>
        <begin position="1"/>
        <end position="154"/>
    </location>
</feature>
<feature type="domain" description="RNase H type-1" evidence="2">
    <location>
        <begin position="3"/>
        <end position="144"/>
    </location>
</feature>
<feature type="binding site" evidence="1">
    <location>
        <position position="12"/>
    </location>
    <ligand>
        <name>Mg(2+)</name>
        <dbReference type="ChEBI" id="CHEBI:18420"/>
        <label>1</label>
    </ligand>
</feature>
<feature type="binding site" evidence="1">
    <location>
        <position position="12"/>
    </location>
    <ligand>
        <name>Mg(2+)</name>
        <dbReference type="ChEBI" id="CHEBI:18420"/>
        <label>2</label>
    </ligand>
</feature>
<feature type="binding site" evidence="1">
    <location>
        <position position="50"/>
    </location>
    <ligand>
        <name>Mg(2+)</name>
        <dbReference type="ChEBI" id="CHEBI:18420"/>
        <label>1</label>
    </ligand>
</feature>
<feature type="binding site" evidence="1">
    <location>
        <position position="72"/>
    </location>
    <ligand>
        <name>Mg(2+)</name>
        <dbReference type="ChEBI" id="CHEBI:18420"/>
        <label>1</label>
    </ligand>
</feature>
<feature type="binding site" evidence="1">
    <location>
        <position position="136"/>
    </location>
    <ligand>
        <name>Mg(2+)</name>
        <dbReference type="ChEBI" id="CHEBI:18420"/>
        <label>2</label>
    </ligand>
</feature>